<sequence>MSRKQLALFEPTLVVQALKEAVKKLNPQAQWRNPVMFIVWIGSLLTTCISIAMASGAMPGNALFSAAISGWLWVTVLFANFAEALAEGRSKAQANSLKGVKKTAFARKLREPKYGAAADKVPADQLRKGDIVLVEAGDIIPCDGEVIEGGASVDESAITGESAPVIRESGGDFASVTGGTRILSDWLVIECSVNPGETFLDRMIAMVEGAQRRKTPNEIALTILLIALTIVFLLATATLWPFSAWGGNAVSVTVLVALLVCLIPTTIGGLLSAIGVAGMSRMLGANVIATSGRAVEAAGDVDVLLLDKTGTITLGNRQASEFIPAQGVDEKTLADAAQLASLADETPEGRSIVILAKQRFNLRERDVQSLHATFVPFTAQSRMSGINIDNRMIRKGSVDAIRRHIEANGGHFPTDVDQKVDQVARQGATPLVVVEGSRVLGVIALKDIVKGGIKERFAQLRQMGIKTVMITGDNRLTAAAIAAEAGVDDFLAEATPEAKLALIRQYQAEGRLVAMTGDGTNDAPALAQADVAVAMNSGTQAAKEAGNMVDLDSNPTKLIEVVHIGKQMLMTRGSLTTFSIANDVAKYFAIIPAAFAATYPQLNALNIMRLHSPDSAILSAVIFNALIIVFLIPLALKGVSYKPLTASAMLRRNLWIYGLGGLLVPFIGIKVIDLLLTVCGLV</sequence>
<gene>
    <name evidence="1" type="primary">kdpB</name>
    <name type="ordered locus">ECIAI1_0673</name>
</gene>
<comment type="function">
    <text evidence="1">Part of the high-affinity ATP-driven potassium transport (or Kdp) system, which catalyzes the hydrolysis of ATP coupled with the electrogenic transport of potassium into the cytoplasm. This subunit is responsible for energy coupling to the transport system and for the release of the potassium ions to the cytoplasm.</text>
</comment>
<comment type="catalytic activity">
    <reaction evidence="1">
        <text>K(+)(out) + ATP + H2O = K(+)(in) + ADP + phosphate + H(+)</text>
        <dbReference type="Rhea" id="RHEA:16777"/>
        <dbReference type="ChEBI" id="CHEBI:15377"/>
        <dbReference type="ChEBI" id="CHEBI:15378"/>
        <dbReference type="ChEBI" id="CHEBI:29103"/>
        <dbReference type="ChEBI" id="CHEBI:30616"/>
        <dbReference type="ChEBI" id="CHEBI:43474"/>
        <dbReference type="ChEBI" id="CHEBI:456216"/>
        <dbReference type="EC" id="7.2.2.6"/>
    </reaction>
    <physiologicalReaction direction="left-to-right" evidence="1">
        <dbReference type="Rhea" id="RHEA:16778"/>
    </physiologicalReaction>
</comment>
<comment type="subunit">
    <text evidence="1">The system is composed of three essential subunits: KdpA, KdpB and KdpC.</text>
</comment>
<comment type="subcellular location">
    <subcellularLocation>
        <location evidence="1">Cell inner membrane</location>
        <topology evidence="1">Multi-pass membrane protein</topology>
    </subcellularLocation>
</comment>
<comment type="similarity">
    <text evidence="1">Belongs to the cation transport ATPase (P-type) (TC 3.A.3) family. Type IA subfamily.</text>
</comment>
<proteinExistence type="inferred from homology"/>
<dbReference type="EC" id="7.2.2.6" evidence="1"/>
<dbReference type="EMBL" id="CU928160">
    <property type="protein sequence ID" value="CAQ97541.1"/>
    <property type="molecule type" value="Genomic_DNA"/>
</dbReference>
<dbReference type="RefSeq" id="WP_000087961.1">
    <property type="nucleotide sequence ID" value="NC_011741.1"/>
</dbReference>
<dbReference type="SMR" id="B7M5L3"/>
<dbReference type="KEGG" id="ecr:ECIAI1_0673"/>
<dbReference type="HOGENOM" id="CLU_025728_2_0_6"/>
<dbReference type="GO" id="GO:0005886">
    <property type="term" value="C:plasma membrane"/>
    <property type="evidence" value="ECO:0007669"/>
    <property type="project" value="UniProtKB-SubCell"/>
</dbReference>
<dbReference type="GO" id="GO:0005524">
    <property type="term" value="F:ATP binding"/>
    <property type="evidence" value="ECO:0007669"/>
    <property type="project" value="UniProtKB-UniRule"/>
</dbReference>
<dbReference type="GO" id="GO:0016887">
    <property type="term" value="F:ATP hydrolysis activity"/>
    <property type="evidence" value="ECO:0007669"/>
    <property type="project" value="InterPro"/>
</dbReference>
<dbReference type="GO" id="GO:0000287">
    <property type="term" value="F:magnesium ion binding"/>
    <property type="evidence" value="ECO:0007669"/>
    <property type="project" value="UniProtKB-UniRule"/>
</dbReference>
<dbReference type="GO" id="GO:0008556">
    <property type="term" value="F:P-type potassium transmembrane transporter activity"/>
    <property type="evidence" value="ECO:0007669"/>
    <property type="project" value="UniProtKB-UniRule"/>
</dbReference>
<dbReference type="CDD" id="cd02078">
    <property type="entry name" value="P-type_ATPase_K"/>
    <property type="match status" value="1"/>
</dbReference>
<dbReference type="FunFam" id="2.70.150.10:FF:000010">
    <property type="entry name" value="Potassium-transporting ATPase ATP-binding subunit"/>
    <property type="match status" value="1"/>
</dbReference>
<dbReference type="FunFam" id="3.40.1110.10:FF:000007">
    <property type="entry name" value="Potassium-transporting ATPase ATP-binding subunit"/>
    <property type="match status" value="1"/>
</dbReference>
<dbReference type="Gene3D" id="3.40.1110.10">
    <property type="entry name" value="Calcium-transporting ATPase, cytoplasmic domain N"/>
    <property type="match status" value="1"/>
</dbReference>
<dbReference type="Gene3D" id="2.70.150.10">
    <property type="entry name" value="Calcium-transporting ATPase, cytoplasmic transduction domain A"/>
    <property type="match status" value="1"/>
</dbReference>
<dbReference type="Gene3D" id="3.40.50.1000">
    <property type="entry name" value="HAD superfamily/HAD-like"/>
    <property type="match status" value="1"/>
</dbReference>
<dbReference type="HAMAP" id="MF_00285">
    <property type="entry name" value="KdpB"/>
    <property type="match status" value="1"/>
</dbReference>
<dbReference type="InterPro" id="IPR023299">
    <property type="entry name" value="ATPase_P-typ_cyto_dom_N"/>
</dbReference>
<dbReference type="InterPro" id="IPR018303">
    <property type="entry name" value="ATPase_P-typ_P_site"/>
</dbReference>
<dbReference type="InterPro" id="IPR023298">
    <property type="entry name" value="ATPase_P-typ_TM_dom_sf"/>
</dbReference>
<dbReference type="InterPro" id="IPR008250">
    <property type="entry name" value="ATPase_P-typ_transduc_dom_A_sf"/>
</dbReference>
<dbReference type="InterPro" id="IPR036412">
    <property type="entry name" value="HAD-like_sf"/>
</dbReference>
<dbReference type="InterPro" id="IPR023214">
    <property type="entry name" value="HAD_sf"/>
</dbReference>
<dbReference type="InterPro" id="IPR006391">
    <property type="entry name" value="P-type_ATPase_bsu_IA"/>
</dbReference>
<dbReference type="InterPro" id="IPR001757">
    <property type="entry name" value="P_typ_ATPase"/>
</dbReference>
<dbReference type="InterPro" id="IPR044492">
    <property type="entry name" value="P_typ_ATPase_HD_dom"/>
</dbReference>
<dbReference type="NCBIfam" id="TIGR01494">
    <property type="entry name" value="ATPase_P-type"/>
    <property type="match status" value="2"/>
</dbReference>
<dbReference type="NCBIfam" id="TIGR01497">
    <property type="entry name" value="kdpB"/>
    <property type="match status" value="1"/>
</dbReference>
<dbReference type="PANTHER" id="PTHR43743">
    <property type="entry name" value="POTASSIUM-TRANSPORTING ATPASE ATP-BINDING SUBUNIT"/>
    <property type="match status" value="1"/>
</dbReference>
<dbReference type="PANTHER" id="PTHR43743:SF1">
    <property type="entry name" value="POTASSIUM-TRANSPORTING ATPASE ATP-BINDING SUBUNIT"/>
    <property type="match status" value="1"/>
</dbReference>
<dbReference type="Pfam" id="PF00122">
    <property type="entry name" value="E1-E2_ATPase"/>
    <property type="match status" value="1"/>
</dbReference>
<dbReference type="Pfam" id="PF00702">
    <property type="entry name" value="Hydrolase"/>
    <property type="match status" value="1"/>
</dbReference>
<dbReference type="PRINTS" id="PR00119">
    <property type="entry name" value="CATATPASE"/>
</dbReference>
<dbReference type="SFLD" id="SFLDG00002">
    <property type="entry name" value="C1.7:_P-type_atpase_like"/>
    <property type="match status" value="1"/>
</dbReference>
<dbReference type="SFLD" id="SFLDF00027">
    <property type="entry name" value="p-type_atpase"/>
    <property type="match status" value="1"/>
</dbReference>
<dbReference type="SUPFAM" id="SSF81653">
    <property type="entry name" value="Calcium ATPase, transduction domain A"/>
    <property type="match status" value="1"/>
</dbReference>
<dbReference type="SUPFAM" id="SSF81665">
    <property type="entry name" value="Calcium ATPase, transmembrane domain M"/>
    <property type="match status" value="1"/>
</dbReference>
<dbReference type="SUPFAM" id="SSF56784">
    <property type="entry name" value="HAD-like"/>
    <property type="match status" value="1"/>
</dbReference>
<dbReference type="SUPFAM" id="SSF81660">
    <property type="entry name" value="Metal cation-transporting ATPase, ATP-binding domain N"/>
    <property type="match status" value="1"/>
</dbReference>
<dbReference type="PROSITE" id="PS00154">
    <property type="entry name" value="ATPASE_E1_E2"/>
    <property type="match status" value="1"/>
</dbReference>
<evidence type="ECO:0000255" key="1">
    <source>
        <dbReference type="HAMAP-Rule" id="MF_00285"/>
    </source>
</evidence>
<organism>
    <name type="scientific">Escherichia coli O8 (strain IAI1)</name>
    <dbReference type="NCBI Taxonomy" id="585034"/>
    <lineage>
        <taxon>Bacteria</taxon>
        <taxon>Pseudomonadati</taxon>
        <taxon>Pseudomonadota</taxon>
        <taxon>Gammaproteobacteria</taxon>
        <taxon>Enterobacterales</taxon>
        <taxon>Enterobacteriaceae</taxon>
        <taxon>Escherichia</taxon>
    </lineage>
</organism>
<reference key="1">
    <citation type="journal article" date="2009" name="PLoS Genet.">
        <title>Organised genome dynamics in the Escherichia coli species results in highly diverse adaptive paths.</title>
        <authorList>
            <person name="Touchon M."/>
            <person name="Hoede C."/>
            <person name="Tenaillon O."/>
            <person name="Barbe V."/>
            <person name="Baeriswyl S."/>
            <person name="Bidet P."/>
            <person name="Bingen E."/>
            <person name="Bonacorsi S."/>
            <person name="Bouchier C."/>
            <person name="Bouvet O."/>
            <person name="Calteau A."/>
            <person name="Chiapello H."/>
            <person name="Clermont O."/>
            <person name="Cruveiller S."/>
            <person name="Danchin A."/>
            <person name="Diard M."/>
            <person name="Dossat C."/>
            <person name="Karoui M.E."/>
            <person name="Frapy E."/>
            <person name="Garry L."/>
            <person name="Ghigo J.M."/>
            <person name="Gilles A.M."/>
            <person name="Johnson J."/>
            <person name="Le Bouguenec C."/>
            <person name="Lescat M."/>
            <person name="Mangenot S."/>
            <person name="Martinez-Jehanne V."/>
            <person name="Matic I."/>
            <person name="Nassif X."/>
            <person name="Oztas S."/>
            <person name="Petit M.A."/>
            <person name="Pichon C."/>
            <person name="Rouy Z."/>
            <person name="Ruf C.S."/>
            <person name="Schneider D."/>
            <person name="Tourret J."/>
            <person name="Vacherie B."/>
            <person name="Vallenet D."/>
            <person name="Medigue C."/>
            <person name="Rocha E.P.C."/>
            <person name="Denamur E."/>
        </authorList>
    </citation>
    <scope>NUCLEOTIDE SEQUENCE [LARGE SCALE GENOMIC DNA]</scope>
    <source>
        <strain>IAI1</strain>
    </source>
</reference>
<keyword id="KW-0067">ATP-binding</keyword>
<keyword id="KW-0997">Cell inner membrane</keyword>
<keyword id="KW-1003">Cell membrane</keyword>
<keyword id="KW-0406">Ion transport</keyword>
<keyword id="KW-0460">Magnesium</keyword>
<keyword id="KW-0472">Membrane</keyword>
<keyword id="KW-0479">Metal-binding</keyword>
<keyword id="KW-0547">Nucleotide-binding</keyword>
<keyword id="KW-0597">Phosphoprotein</keyword>
<keyword id="KW-0630">Potassium</keyword>
<keyword id="KW-0633">Potassium transport</keyword>
<keyword id="KW-1278">Translocase</keyword>
<keyword id="KW-0812">Transmembrane</keyword>
<keyword id="KW-1133">Transmembrane helix</keyword>
<keyword id="KW-0813">Transport</keyword>
<protein>
    <recommendedName>
        <fullName evidence="1">Potassium-transporting ATPase ATP-binding subunit</fullName>
        <ecNumber evidence="1">7.2.2.6</ecNumber>
    </recommendedName>
    <alternativeName>
        <fullName evidence="1">ATP phosphohydrolase [potassium-transporting] B chain</fullName>
    </alternativeName>
    <alternativeName>
        <fullName evidence="1">Potassium-binding and translocating subunit B</fullName>
    </alternativeName>
    <alternativeName>
        <fullName evidence="1">Potassium-translocating ATPase B chain</fullName>
    </alternativeName>
</protein>
<feature type="chain" id="PRO_1000119410" description="Potassium-transporting ATPase ATP-binding subunit">
    <location>
        <begin position="1"/>
        <end position="682"/>
    </location>
</feature>
<feature type="transmembrane region" description="Helical" evidence="1">
    <location>
        <begin position="34"/>
        <end position="54"/>
    </location>
</feature>
<feature type="transmembrane region" description="Helical" evidence="1">
    <location>
        <begin position="62"/>
        <end position="82"/>
    </location>
</feature>
<feature type="transmembrane region" description="Helical" evidence="1">
    <location>
        <begin position="219"/>
        <end position="239"/>
    </location>
</feature>
<feature type="transmembrane region" description="Helical" evidence="1">
    <location>
        <begin position="254"/>
        <end position="274"/>
    </location>
</feature>
<feature type="transmembrane region" description="Helical" evidence="1">
    <location>
        <begin position="588"/>
        <end position="608"/>
    </location>
</feature>
<feature type="transmembrane region" description="Helical" evidence="1">
    <location>
        <begin position="616"/>
        <end position="636"/>
    </location>
</feature>
<feature type="transmembrane region" description="Helical" evidence="1">
    <location>
        <begin position="656"/>
        <end position="676"/>
    </location>
</feature>
<feature type="active site" description="4-aspartylphosphate intermediate" evidence="1">
    <location>
        <position position="307"/>
    </location>
</feature>
<feature type="binding site" evidence="1">
    <location>
        <position position="344"/>
    </location>
    <ligand>
        <name>ATP</name>
        <dbReference type="ChEBI" id="CHEBI:30616"/>
    </ligand>
</feature>
<feature type="binding site" evidence="1">
    <location>
        <position position="348"/>
    </location>
    <ligand>
        <name>ATP</name>
        <dbReference type="ChEBI" id="CHEBI:30616"/>
    </ligand>
</feature>
<feature type="binding site" evidence="1">
    <location>
        <begin position="377"/>
        <end position="384"/>
    </location>
    <ligand>
        <name>ATP</name>
        <dbReference type="ChEBI" id="CHEBI:30616"/>
    </ligand>
</feature>
<feature type="binding site" evidence="1">
    <location>
        <position position="395"/>
    </location>
    <ligand>
        <name>ATP</name>
        <dbReference type="ChEBI" id="CHEBI:30616"/>
    </ligand>
</feature>
<feature type="binding site" evidence="1">
    <location>
        <position position="518"/>
    </location>
    <ligand>
        <name>Mg(2+)</name>
        <dbReference type="ChEBI" id="CHEBI:18420"/>
    </ligand>
</feature>
<feature type="binding site" evidence="1">
    <location>
        <position position="522"/>
    </location>
    <ligand>
        <name>Mg(2+)</name>
        <dbReference type="ChEBI" id="CHEBI:18420"/>
    </ligand>
</feature>
<accession>B7M5L3</accession>
<name>KDPB_ECO8A</name>